<evidence type="ECO:0000255" key="1">
    <source>
        <dbReference type="PROSITE-ProRule" id="PRU00166"/>
    </source>
</evidence>
<evidence type="ECO:0000255" key="2">
    <source>
        <dbReference type="PROSITE-ProRule" id="PRU00191"/>
    </source>
</evidence>
<evidence type="ECO:0000255" key="3">
    <source>
        <dbReference type="PROSITE-ProRule" id="PRU00550"/>
    </source>
</evidence>
<evidence type="ECO:0000256" key="4">
    <source>
        <dbReference type="SAM" id="MobiDB-lite"/>
    </source>
</evidence>
<evidence type="ECO:0000269" key="5">
    <source>
    </source>
</evidence>
<evidence type="ECO:0000269" key="6">
    <source>
    </source>
</evidence>
<evidence type="ECO:0000269" key="7">
    <source>
    </source>
</evidence>
<evidence type="ECO:0000269" key="8">
    <source>
    </source>
</evidence>
<evidence type="ECO:0000303" key="9">
    <source>
    </source>
</evidence>
<evidence type="ECO:0000305" key="10"/>
<evidence type="ECO:0007744" key="11">
    <source>
    </source>
</evidence>
<evidence type="ECO:0007744" key="12">
    <source>
    </source>
</evidence>
<evidence type="ECO:0007744" key="13">
    <source>
    </source>
</evidence>
<evidence type="ECO:0007744" key="14">
    <source>
    </source>
</evidence>
<evidence type="ECO:0007744" key="15">
    <source>
    </source>
</evidence>
<reference key="1">
    <citation type="journal article" date="1991" name="Proc. Natl. Acad. Sci. U.S.A.">
        <title>Expression of three mammalian cDNAs that interfere with RAS function in Saccharomyces cerevisiae.</title>
        <authorList>
            <person name="Colicelli J."/>
            <person name="Nicolette C."/>
            <person name="Birchmeier C."/>
            <person name="Rodgers L."/>
            <person name="Riggs M."/>
            <person name="Wigler M."/>
        </authorList>
    </citation>
    <scope>PRELIMINARY NUCLEOTIDE SEQUENCE [MRNA]</scope>
    <source>
        <tissue>Glial cell</tissue>
    </source>
</reference>
<reference key="2">
    <citation type="journal article" date="1995" name="Mol. Cell. Biol.">
        <title>A human protein selected for interference with Ras function interacts directly with Ras and competes with Raf1.</title>
        <authorList>
            <person name="Han L."/>
            <person name="Colicelli J."/>
        </authorList>
    </citation>
    <scope>PRELIMINARY NUCLEOTIDE SEQUENCE [MRNA]</scope>
</reference>
<reference key="3">
    <citation type="journal article" date="1997" name="Proc. Natl. Acad. Sci. U.S.A.">
        <title>Protein binding and signaling properties of RIN1 suggest a unique effector function.</title>
        <authorList>
            <person name="Han L."/>
            <person name="Wong D."/>
            <person name="Dhaka A."/>
            <person name="Afar D.E.H."/>
            <person name="White M."/>
            <person name="Xie W."/>
            <person name="Herschman H."/>
            <person name="Witte O."/>
            <person name="Colicelli J."/>
        </authorList>
    </citation>
    <scope>NUCLEOTIDE SEQUENCE [MRNA] (ISOFORMS RIN1 AND RIN1-DELTA)</scope>
    <scope>SEQUENCE REVISION</scope>
    <scope>FUNCTION</scope>
    <scope>DOMAINS</scope>
    <scope>PHOSPHORYLATION</scope>
    <scope>TISSUE SPECIFICITY</scope>
    <source>
        <tissue>Glioblastoma</tissue>
    </source>
</reference>
<reference key="4">
    <citation type="journal article" date="2004" name="Genome Res.">
        <title>The status, quality, and expansion of the NIH full-length cDNA project: the Mammalian Gene Collection (MGC).</title>
        <authorList>
            <consortium name="The MGC Project Team"/>
        </authorList>
    </citation>
    <scope>NUCLEOTIDE SEQUENCE [LARGE SCALE MRNA]</scope>
    <source>
        <tissue>Lung</tissue>
    </source>
</reference>
<reference key="5">
    <citation type="journal article" date="1997" name="Immunity">
        <title>Regulation of the oncogenic activity of BCR-ABL by a tightly bound substrate protein RIN1.</title>
        <authorList>
            <person name="Afar D.E.H."/>
            <person name="Han L."/>
            <person name="McLaughlin J."/>
            <person name="Wong S."/>
            <person name="Dhaka A."/>
            <person name="Parmar K."/>
            <person name="Rosenberg N."/>
            <person name="Witte O.N."/>
            <person name="Colicelli J."/>
        </authorList>
    </citation>
    <scope>FUNCTION</scope>
    <scope>INTERACTION WITH ABL1</scope>
    <scope>PHOSPHORYLATION BY ABL1</scope>
</reference>
<reference key="6">
    <citation type="journal article" date="2001" name="Dev. Cell">
        <title>Ras-activated endocytosis is mediated by the Rab5 guanine nucleotide exchange activity of RIN1.</title>
        <authorList>
            <person name="Tall G.G."/>
            <person name="Barbieri M.A."/>
            <person name="Stahl P.D."/>
            <person name="Horazdovsky B.F."/>
        </authorList>
    </citation>
    <scope>GEF ACTIVITY</scope>
</reference>
<reference key="7">
    <citation type="journal article" date="2002" name="Mol. Cell. Biol.">
        <title>The RAS effector RIN1 directly competes with RAF and is regulated by 14-3-3 proteins.</title>
        <authorList>
            <person name="Wang Y."/>
            <person name="Waldron R.T."/>
            <person name="Dhaka A."/>
            <person name="Patel A."/>
            <person name="Riley M.M."/>
            <person name="Rozengurt E."/>
            <person name="Colicelli J."/>
        </authorList>
    </citation>
    <scope>SUBCELLULAR LOCATION</scope>
    <scope>PHOSPHORYLATION AT SER-351</scope>
    <scope>MUTAGENESIS OF SER-351</scope>
</reference>
<reference key="8">
    <citation type="journal article" date="2005" name="Curr. Biol.">
        <title>RIN1 is an ABL tyrosine kinase activator and a regulator of epithelial-cell adhesion and migration.</title>
        <authorList>
            <person name="Hu H."/>
            <person name="Bliss J.M."/>
            <person name="Wang Y."/>
            <person name="Colicelli J."/>
        </authorList>
    </citation>
    <scope>FUNCTION</scope>
    <scope>INTERACTION WITH ABL1 AND ABL2</scope>
    <scope>PHOSPHORYLATION AT TYR-36</scope>
</reference>
<reference key="9">
    <citation type="journal article" date="2006" name="Nat. Biotechnol.">
        <title>A probability-based approach for high-throughput protein phosphorylation analysis and site localization.</title>
        <authorList>
            <person name="Beausoleil S.A."/>
            <person name="Villen J."/>
            <person name="Gerber S.A."/>
            <person name="Rush J."/>
            <person name="Gygi S.P."/>
        </authorList>
    </citation>
    <scope>PHOSPHORYLATION [LARGE SCALE ANALYSIS] AT SER-333 AND SER-337</scope>
    <scope>IDENTIFICATION BY MASS SPECTROMETRY [LARGE SCALE ANALYSIS]</scope>
    <source>
        <tissue>Cervix carcinoma</tissue>
    </source>
</reference>
<reference key="10">
    <citation type="journal article" date="2008" name="Proc. Natl. Acad. Sci. U.S.A.">
        <title>A quantitative atlas of mitotic phosphorylation.</title>
        <authorList>
            <person name="Dephoure N."/>
            <person name="Zhou C."/>
            <person name="Villen J."/>
            <person name="Beausoleil S.A."/>
            <person name="Bakalarski C.E."/>
            <person name="Elledge S.J."/>
            <person name="Gygi S.P."/>
        </authorList>
    </citation>
    <scope>PHOSPHORYLATION [LARGE SCALE ANALYSIS] AT SER-210; SER-258; SER-337; SER-351 AND SER-609</scope>
    <scope>IDENTIFICATION BY MASS SPECTROMETRY [LARGE SCALE ANALYSIS]</scope>
    <source>
        <tissue>Cervix carcinoma</tissue>
    </source>
</reference>
<reference key="11">
    <citation type="journal article" date="2010" name="Sci. Signal.">
        <title>Quantitative phosphoproteomics reveals widespread full phosphorylation site occupancy during mitosis.</title>
        <authorList>
            <person name="Olsen J.V."/>
            <person name="Vermeulen M."/>
            <person name="Santamaria A."/>
            <person name="Kumar C."/>
            <person name="Miller M.L."/>
            <person name="Jensen L.J."/>
            <person name="Gnad F."/>
            <person name="Cox J."/>
            <person name="Jensen T.S."/>
            <person name="Nigg E.A."/>
            <person name="Brunak S."/>
            <person name="Mann M."/>
        </authorList>
    </citation>
    <scope>ACETYLATION [LARGE SCALE ANALYSIS] AT MET-1</scope>
    <scope>PHOSPHORYLATION [LARGE SCALE ANALYSIS] AT SER-3; SER-16 AND SER-337</scope>
    <scope>IDENTIFICATION BY MASS SPECTROMETRY [LARGE SCALE ANALYSIS]</scope>
    <source>
        <tissue>Cervix carcinoma</tissue>
    </source>
</reference>
<reference key="12">
    <citation type="journal article" date="2013" name="J. Proteome Res.">
        <title>Toward a comprehensive characterization of a human cancer cell phosphoproteome.</title>
        <authorList>
            <person name="Zhou H."/>
            <person name="Di Palma S."/>
            <person name="Preisinger C."/>
            <person name="Peng M."/>
            <person name="Polat A.N."/>
            <person name="Heck A.J."/>
            <person name="Mohammed S."/>
        </authorList>
    </citation>
    <scope>PHOSPHORYLATION [LARGE SCALE ANALYSIS] AT SER-333; SER-351; SER-609 AND SER-611</scope>
    <scope>IDENTIFICATION BY MASS SPECTROMETRY [LARGE SCALE ANALYSIS]</scope>
    <source>
        <tissue>Cervix carcinoma</tissue>
    </source>
</reference>
<reference key="13">
    <citation type="journal article" date="2014" name="Mol. Cell. Proteomics">
        <title>Immunoaffinity enrichment and mass spectrometry analysis of protein methylation.</title>
        <authorList>
            <person name="Guo A."/>
            <person name="Gu H."/>
            <person name="Zhou J."/>
            <person name="Mulhern D."/>
            <person name="Wang Y."/>
            <person name="Lee K.A."/>
            <person name="Yang V."/>
            <person name="Aguiar M."/>
            <person name="Kornhauser J."/>
            <person name="Jia X."/>
            <person name="Ren J."/>
            <person name="Beausoleil S.A."/>
            <person name="Silva J.C."/>
            <person name="Vemulapalli V."/>
            <person name="Bedford M.T."/>
            <person name="Comb M.J."/>
        </authorList>
    </citation>
    <scope>METHYLATION [LARGE SCALE ANALYSIS] AT ARG-692</scope>
    <scope>IDENTIFICATION BY MASS SPECTROMETRY [LARGE SCALE ANALYSIS]</scope>
    <source>
        <tissue>Colon carcinoma</tissue>
    </source>
</reference>
<feature type="chain" id="PRO_0000191317" description="Ras and Rab interactor 1">
    <location>
        <begin position="1"/>
        <end position="783"/>
    </location>
</feature>
<feature type="domain" description="SH2" evidence="2">
    <location>
        <begin position="69"/>
        <end position="163"/>
    </location>
</feature>
<feature type="domain" description="VPS9" evidence="3">
    <location>
        <begin position="456"/>
        <end position="598"/>
    </location>
</feature>
<feature type="domain" description="Ras-associating" evidence="1">
    <location>
        <begin position="624"/>
        <end position="706"/>
    </location>
</feature>
<feature type="region of interest" description="Disordered" evidence="4">
    <location>
        <begin position="1"/>
        <end position="53"/>
    </location>
</feature>
<feature type="region of interest" description="Disordered" evidence="4">
    <location>
        <begin position="250"/>
        <end position="282"/>
    </location>
</feature>
<feature type="region of interest" description="Ras and 14-3-3 protein binding region">
    <location>
        <begin position="294"/>
        <end position="727"/>
    </location>
</feature>
<feature type="region of interest" description="Disordered" evidence="4">
    <location>
        <begin position="295"/>
        <end position="342"/>
    </location>
</feature>
<feature type="region of interest" description="Disordered" evidence="4">
    <location>
        <begin position="709"/>
        <end position="783"/>
    </location>
</feature>
<feature type="compositionally biased region" description="Pro residues" evidence="4">
    <location>
        <begin position="257"/>
        <end position="269"/>
    </location>
</feature>
<feature type="compositionally biased region" description="Low complexity" evidence="4">
    <location>
        <begin position="317"/>
        <end position="334"/>
    </location>
</feature>
<feature type="compositionally biased region" description="Low complexity" evidence="4">
    <location>
        <begin position="762"/>
        <end position="772"/>
    </location>
</feature>
<feature type="modified residue" description="N-acetylmethionine" evidence="13">
    <location>
        <position position="1"/>
    </location>
</feature>
<feature type="modified residue" description="Phosphoserine" evidence="13">
    <location>
        <position position="3"/>
    </location>
</feature>
<feature type="modified residue" description="Phosphoserine" evidence="13">
    <location>
        <position position="16"/>
    </location>
</feature>
<feature type="modified residue" description="Phosphotyrosine; by ABL1 and ABL2" evidence="6">
    <location>
        <position position="36"/>
    </location>
</feature>
<feature type="modified residue" description="Phosphoserine" evidence="12">
    <location>
        <position position="210"/>
    </location>
</feature>
<feature type="modified residue" description="Phosphoserine" evidence="12">
    <location>
        <position position="258"/>
    </location>
</feature>
<feature type="modified residue" description="Phosphoserine" evidence="11 14">
    <location>
        <position position="333"/>
    </location>
</feature>
<feature type="modified residue" description="Phosphoserine" evidence="11 12 13">
    <location>
        <position position="337"/>
    </location>
</feature>
<feature type="modified residue" description="Phosphoserine; by PKD/PRKD1" evidence="5 12 14">
    <location>
        <position position="351"/>
    </location>
</feature>
<feature type="modified residue" description="Phosphoserine" evidence="12 14">
    <location>
        <position position="609"/>
    </location>
</feature>
<feature type="modified residue" description="Phosphoserine" evidence="14">
    <location>
        <position position="611"/>
    </location>
</feature>
<feature type="modified residue" description="Omega-N-methylarginine" evidence="15">
    <location>
        <position position="692"/>
    </location>
</feature>
<feature type="splice variant" id="VSP_004377" description="In isoform RIN1-delta." evidence="9">
    <location>
        <begin position="429"/>
        <end position="490"/>
    </location>
</feature>
<feature type="mutagenesis site" description="Abolishes phosphorylation by PKD and the interaction with 14-3-3 proteins." evidence="5">
    <original>S</original>
    <variation>A</variation>
    <location>
        <position position="351"/>
    </location>
</feature>
<feature type="sequence conflict" description="In Ref. 1, 2 and 3." evidence="10" ref="1 2 3">
    <original>AGPE</original>
    <variation>DGQR</variation>
    <location>
        <begin position="392"/>
        <end position="395"/>
    </location>
</feature>
<feature type="sequence conflict" description="In Ref. 1, 2 and 3." evidence="10" ref="1 2 3">
    <original>Q</original>
    <variation>E</variation>
    <location>
        <position position="400"/>
    </location>
</feature>
<feature type="sequence conflict" description="In Ref. 1, 2 and 3." evidence="10" ref="1 2 3">
    <original>L</original>
    <variation>V</variation>
    <location>
        <position position="423"/>
    </location>
</feature>
<feature type="sequence conflict" description="In Ref. 1, 2 and 3." evidence="10" ref="1 2 3">
    <original>L</original>
    <variation>V</variation>
    <location>
        <position position="503"/>
    </location>
</feature>
<feature type="sequence conflict" description="In Ref. 1, 2 and 3." evidence="10" ref="1 2 3">
    <original>A</original>
    <variation>S</variation>
    <location>
        <position position="534"/>
    </location>
</feature>
<feature type="sequence conflict" description="In Ref. 1, 2 and 3." evidence="10" ref="1 2 3">
    <original>E</original>
    <variation>G</variation>
    <location>
        <position position="538"/>
    </location>
</feature>
<accession>Q13671</accession>
<accession>O15010</accession>
<accession>Q00427</accession>
<accession>Q96CC8</accession>
<protein>
    <recommendedName>
        <fullName>Ras and Rab interactor 1</fullName>
    </recommendedName>
    <alternativeName>
        <fullName>Ras inhibitor JC99</fullName>
    </alternativeName>
    <alternativeName>
        <fullName>Ras interaction/interference protein 1</fullName>
    </alternativeName>
</protein>
<keyword id="KW-0007">Acetylation</keyword>
<keyword id="KW-0025">Alternative splicing</keyword>
<keyword id="KW-0963">Cytoplasm</keyword>
<keyword id="KW-0206">Cytoskeleton</keyword>
<keyword id="KW-0254">Endocytosis</keyword>
<keyword id="KW-0343">GTPase activation</keyword>
<keyword id="KW-0472">Membrane</keyword>
<keyword id="KW-0488">Methylation</keyword>
<keyword id="KW-0597">Phosphoprotein</keyword>
<keyword id="KW-1267">Proteomics identification</keyword>
<keyword id="KW-1185">Reference proteome</keyword>
<keyword id="KW-0727">SH2 domain</keyword>
<proteinExistence type="evidence at protein level"/>
<organism>
    <name type="scientific">Homo sapiens</name>
    <name type="common">Human</name>
    <dbReference type="NCBI Taxonomy" id="9606"/>
    <lineage>
        <taxon>Eukaryota</taxon>
        <taxon>Metazoa</taxon>
        <taxon>Chordata</taxon>
        <taxon>Craniata</taxon>
        <taxon>Vertebrata</taxon>
        <taxon>Euteleostomi</taxon>
        <taxon>Mammalia</taxon>
        <taxon>Eutheria</taxon>
        <taxon>Euarchontoglires</taxon>
        <taxon>Primates</taxon>
        <taxon>Haplorrhini</taxon>
        <taxon>Catarrhini</taxon>
        <taxon>Hominidae</taxon>
        <taxon>Homo</taxon>
    </lineage>
</organism>
<sequence length="783" mass="84099">MESPGESGAGSPGAPSPSSFTTGHLAREKPAQDPLYDVPNASGGQAGGPQRPGRVVSLRERLLLTRPVWLQLQANAAAALHMLRTEPPGTFLVRKSNTRQCQALCMRLPEASGPSFVSSHYILESPGGVSLEGSELMFPDLVQLICAYCHTRDILLLPLQLPRAIHHAATHKELEAISHLGIEFWSSSLNIKAQRGPAGGPVLPQLKARSPQELDQGTGAALCFFNPLFPGDLGPTKREKFKRSFKVRVSTETSSPLSPPAVPPPPVPVLPGAVPSQTERLPPCQLLRRESSVGYRVPAGSGPSLPPMPSLQEVDCGSPSSSEEEGVPGSRGSPATSPHLGRRRPLLRSMSAAFCSLLAPERQVGRAAAALMQDRHTAAGQLVQDLLTQVRAGPEPQELQGIRQALSRARAMLSAELGPEKLLSPKRLEHVLEKSLHCSVLKPLRPILAARLRRRLAADGSLGRLAEGLRLARAQGPGAFGSHLSLPSPVELEQVRQKLLQLLRTYSPSAQVKRLLQACKLLYMALRTQEGEGAGADEFLPLLSLVLAHCDLPELLLEAEYMSELLEPSLLTGEGGYYLTSLSASLALLSGLGQAHTLPLSPVQELRRSLSLWEQRRLPATHCFQHLLRVAYQDPSSGCTSKTLAVPPEASIATLNQLCATKFRVTQPNTFGLFLYKEQGYHRLPPGALAHRLPTTGYLVYRRAEWPETQGAVTEEEGSGQSEARSRGEEQGCQGDGDAGVKASPRDIREQSETTAEGGQGQAQEGPAQPGEPEAEGSRAAEE</sequence>
<name>RIN1_HUMAN</name>
<comment type="function">
    <text evidence="6 7 8">Ras effector protein, which may serve as an inhibitory modulator of neuronal plasticity in aversive memory formation. Can affect Ras signaling at different levels. First, by competing with RAF1 protein for binding to activated Ras. Second, by enhancing signaling from ABL1 and ABL2, which regulate cytoskeletal remodeling. Third, by activating RAB5A, possibly by functioning as a guanine nucleotide exchange factor (GEF) for RAB5A, by exchanging bound GDP for free GTP, and facilitating Ras-activated receptor endocytosis.</text>
</comment>
<comment type="subunit">
    <text evidence="6 8">Interacts with the GTP-bound form of Ras proteins (NRAS, HRAS and KRAS). This interaction prevents the association between RAF1 and Ras. Interacts with 14-3-3 proteins YWHAB, YWHAE and YWHAZ when phosphorylated on Ser-351. Interacts with the SH3 domain of ABL1 and ABL2. Interacts with RAB5A. The interaction with Ras is probably regulated and antagonized by the interaction with 14-3-3 proteins. The interaction with 14-3-3 proteins is regulated by phosphorylation on Ser-351.</text>
</comment>
<comment type="interaction">
    <interactant intactId="EBI-366017">
        <id>Q13671</id>
    </interactant>
    <interactant intactId="EBI-375543">
        <id>P00519</id>
        <label>ABL1</label>
    </interactant>
    <organismsDiffer>false</organismsDiffer>
    <experiments>6</experiments>
</comment>
<comment type="interaction">
    <interactant intactId="EBI-366017">
        <id>Q13671</id>
    </interactant>
    <interactant intactId="EBI-1102694">
        <id>P42684</id>
        <label>ABL2</label>
    </interactant>
    <organismsDiffer>false</organismsDiffer>
    <experiments>6</experiments>
</comment>
<comment type="interaction">
    <interactant intactId="EBI-366017">
        <id>Q13671</id>
    </interactant>
    <interactant intactId="EBI-11954519">
        <id>Q49AR9</id>
        <label>ANKS1A</label>
    </interactant>
    <organismsDiffer>false</organismsDiffer>
    <experiments>3</experiments>
</comment>
<comment type="interaction">
    <interactant intactId="EBI-366017">
        <id>Q13671</id>
    </interactant>
    <interactant intactId="EBI-17714371">
        <id>Q7Z6G8-3</id>
        <label>ANKS1B</label>
    </interactant>
    <organismsDiffer>false</organismsDiffer>
    <experiments>3</experiments>
</comment>
<comment type="interaction">
    <interactant intactId="EBI-366017">
        <id>Q13671</id>
    </interactant>
    <interactant intactId="EBI-739580">
        <id>Q13137</id>
        <label>CALCOCO2</label>
    </interactant>
    <organismsDiffer>false</organismsDiffer>
    <experiments>4</experiments>
</comment>
<comment type="interaction">
    <interactant intactId="EBI-366017">
        <id>Q13671</id>
    </interactant>
    <interactant intactId="EBI-12188723">
        <id>Q96L46</id>
        <label>CAPNS2</label>
    </interactant>
    <organismsDiffer>false</organismsDiffer>
    <experiments>3</experiments>
</comment>
<comment type="interaction">
    <interactant intactId="EBI-366017">
        <id>Q13671</id>
    </interactant>
    <interactant intactId="EBI-3866279">
        <id>Q9BWT7</id>
        <label>CARD10</label>
    </interactant>
    <organismsDiffer>false</organismsDiffer>
    <experiments>3</experiments>
</comment>
<comment type="interaction">
    <interactant intactId="EBI-366017">
        <id>Q13671</id>
    </interactant>
    <interactant intactId="EBI-1573056">
        <id>Q9BSQ5</id>
        <label>CCM2</label>
    </interactant>
    <organismsDiffer>false</organismsDiffer>
    <experiments>4</experiments>
</comment>
<comment type="interaction">
    <interactant intactId="EBI-366017">
        <id>Q13671</id>
    </interactant>
    <interactant intactId="EBI-11982645">
        <id>Q8N4Y2-3</id>
        <label>CRACR2B</label>
    </interactant>
    <organismsDiffer>false</organismsDiffer>
    <experiments>3</experiments>
</comment>
<comment type="interaction">
    <interactant intactId="EBI-366017">
        <id>Q13671</id>
    </interactant>
    <interactant intactId="EBI-297353">
        <id>P00533</id>
        <label>EGFR</label>
    </interactant>
    <organismsDiffer>false</organismsDiffer>
    <experiments>3</experiments>
</comment>
<comment type="interaction">
    <interactant intactId="EBI-366017">
        <id>Q13671</id>
    </interactant>
    <interactant intactId="EBI-711990">
        <id>O00303</id>
        <label>EIF3F</label>
    </interactant>
    <organismsDiffer>false</organismsDiffer>
    <experiments>3</experiments>
</comment>
<comment type="interaction">
    <interactant intactId="EBI-366017">
        <id>Q13671</id>
    </interactant>
    <interactant intactId="EBI-720706">
        <id>P21860</id>
        <label>ERBB3</label>
    </interactant>
    <organismsDiffer>false</organismsDiffer>
    <experiments>2</experiments>
</comment>
<comment type="interaction">
    <interactant intactId="EBI-366017">
        <id>Q13671</id>
    </interactant>
    <interactant intactId="EBI-618309">
        <id>Q08379</id>
        <label>GOLGA2</label>
    </interactant>
    <organismsDiffer>false</organismsDiffer>
    <experiments>3</experiments>
</comment>
<comment type="interaction">
    <interactant intactId="EBI-366017">
        <id>Q13671</id>
    </interactant>
    <interactant intactId="EBI-5916454">
        <id>A6NEM1</id>
        <label>GOLGA6L9</label>
    </interactant>
    <organismsDiffer>false</organismsDiffer>
    <experiments>3</experiments>
</comment>
<comment type="interaction">
    <interactant intactId="EBI-366017">
        <id>Q13671</id>
    </interactant>
    <interactant intactId="EBI-740641">
        <id>Q9NP66</id>
        <label>HMG20A</label>
    </interactant>
    <organismsDiffer>false</organismsDiffer>
    <experiments>3</experiments>
</comment>
<comment type="interaction">
    <interactant intactId="EBI-366017">
        <id>Q13671</id>
    </interactant>
    <interactant intactId="EBI-350145">
        <id>P01112</id>
        <label>HRAS</label>
    </interactant>
    <organismsDiffer>false</organismsDiffer>
    <experiments>14</experiments>
</comment>
<comment type="interaction">
    <interactant intactId="EBI-366017">
        <id>Q13671</id>
    </interactant>
    <interactant intactId="EBI-7116203">
        <id>O75031</id>
        <label>HSF2BP</label>
    </interactant>
    <organismsDiffer>false</organismsDiffer>
    <experiments>3</experiments>
</comment>
<comment type="interaction">
    <interactant intactId="EBI-366017">
        <id>Q13671</id>
    </interactant>
    <interactant intactId="EBI-740929">
        <id>Q53G59</id>
        <label>KLHL12</label>
    </interactant>
    <organismsDiffer>false</organismsDiffer>
    <experiments>3</experiments>
</comment>
<comment type="interaction">
    <interactant intactId="EBI-366017">
        <id>Q13671</id>
    </interactant>
    <interactant intactId="EBI-1047093">
        <id>O76011</id>
        <label>KRT34</label>
    </interactant>
    <organismsDiffer>false</organismsDiffer>
    <experiments>3</experiments>
</comment>
<comment type="interaction">
    <interactant intactId="EBI-366017">
        <id>Q13671</id>
    </interactant>
    <interactant intactId="EBI-11992140">
        <id>Q3LI76</id>
        <label>KRTAP15-1</label>
    </interactant>
    <organismsDiffer>false</organismsDiffer>
    <experiments>3</experiments>
</comment>
<comment type="interaction">
    <interactant intactId="EBI-366017">
        <id>Q13671</id>
    </interactant>
    <interactant intactId="EBI-741037">
        <id>Q9BRK4</id>
        <label>LZTS2</label>
    </interactant>
    <organismsDiffer>false</organismsDiffer>
    <experiments>9</experiments>
</comment>
<comment type="interaction">
    <interactant intactId="EBI-366017">
        <id>Q13671</id>
    </interactant>
    <interactant intactId="EBI-724076">
        <id>Q99750</id>
        <label>MDFI</label>
    </interactant>
    <organismsDiffer>false</organismsDiffer>
    <experiments>3</experiments>
</comment>
<comment type="interaction">
    <interactant intactId="EBI-366017">
        <id>Q13671</id>
    </interactant>
    <interactant intactId="EBI-721993">
        <id>P01111</id>
        <label>NRAS</label>
    </interactant>
    <organismsDiffer>false</organismsDiffer>
    <experiments>13</experiments>
</comment>
<comment type="interaction">
    <interactant intactId="EBI-366017">
        <id>Q13671</id>
    </interactant>
    <interactant intactId="EBI-79165">
        <id>Q9NRD5</id>
        <label>PICK1</label>
    </interactant>
    <organismsDiffer>false</organismsDiffer>
    <experiments>3</experiments>
</comment>
<comment type="interaction">
    <interactant intactId="EBI-366017">
        <id>Q13671</id>
    </interactant>
    <interactant intactId="EBI-949255">
        <id>Q58EX7</id>
        <label>PLEKHG4</label>
    </interactant>
    <organismsDiffer>false</organismsDiffer>
    <experiments>3</experiments>
</comment>
<comment type="interaction">
    <interactant intactId="EBI-366017">
        <id>Q13671</id>
    </interactant>
    <interactant intactId="EBI-491037">
        <id>P62070</id>
        <label>RRAS2</label>
    </interactant>
    <organismsDiffer>false</organismsDiffer>
    <experiments>5</experiments>
</comment>
<comment type="interaction">
    <interactant intactId="EBI-366017">
        <id>Q13671</id>
    </interactant>
    <interactant intactId="EBI-742673">
        <id>Q15437</id>
        <label>SEC23B</label>
    </interactant>
    <organismsDiffer>false</organismsDiffer>
    <experiments>3</experiments>
</comment>
<comment type="interaction">
    <interactant intactId="EBI-366017">
        <id>Q13671</id>
    </interactant>
    <interactant intactId="EBI-1752620">
        <id>Q15036</id>
        <label>SNX17</label>
    </interactant>
    <organismsDiffer>false</organismsDiffer>
    <experiments>3</experiments>
</comment>
<comment type="interaction">
    <interactant intactId="EBI-366017">
        <id>Q13671</id>
    </interactant>
    <interactant intactId="EBI-741237">
        <id>O60504</id>
        <label>SORBS3</label>
    </interactant>
    <organismsDiffer>false</organismsDiffer>
    <experiments>3</experiments>
</comment>
<comment type="interaction">
    <interactant intactId="EBI-366017">
        <id>Q13671</id>
    </interactant>
    <interactant intactId="EBI-5235340">
        <id>Q7Z699</id>
        <label>SPRED1</label>
    </interactant>
    <organismsDiffer>false</organismsDiffer>
    <experiments>3</experiments>
</comment>
<comment type="interaction">
    <interactant intactId="EBI-366017">
        <id>Q13671</id>
    </interactant>
    <interactant intactId="EBI-373258">
        <id>O75886</id>
        <label>STAM2</label>
    </interactant>
    <organismsDiffer>false</organismsDiffer>
    <experiments>4</experiments>
</comment>
<comment type="interaction">
    <interactant intactId="EBI-366017">
        <id>Q13671</id>
    </interactant>
    <interactant intactId="EBI-1644036">
        <id>Q86TI0</id>
        <label>TBC1D1</label>
    </interactant>
    <organismsDiffer>false</organismsDiffer>
    <experiments>3</experiments>
</comment>
<comment type="interaction">
    <interactant intactId="EBI-366017">
        <id>Q13671</id>
    </interactant>
    <interactant intactId="EBI-1105213">
        <id>Q9UBB9</id>
        <label>TFIP11</label>
    </interactant>
    <organismsDiffer>false</organismsDiffer>
    <experiments>3</experiments>
</comment>
<comment type="interaction">
    <interactant intactId="EBI-366017">
        <id>Q13671</id>
    </interactant>
    <interactant intactId="EBI-355744">
        <id>Q12933</id>
        <label>TRAF2</label>
    </interactant>
    <organismsDiffer>false</organismsDiffer>
    <experiments>3</experiments>
</comment>
<comment type="interaction">
    <interactant intactId="EBI-366017">
        <id>Q13671</id>
    </interactant>
    <interactant intactId="EBI-740098">
        <id>P36406</id>
        <label>TRIM23</label>
    </interactant>
    <organismsDiffer>false</organismsDiffer>
    <experiments>3</experiments>
</comment>
<comment type="interaction">
    <interactant intactId="EBI-366017">
        <id>Q13671</id>
    </interactant>
    <interactant intactId="EBI-719493">
        <id>P14373</id>
        <label>TRIM27</label>
    </interactant>
    <organismsDiffer>false</organismsDiffer>
    <experiments>3</experiments>
</comment>
<comment type="interaction">
    <interactant intactId="EBI-366017">
        <id>Q13671</id>
    </interactant>
    <interactant intactId="EBI-2813981">
        <id>Q9C029</id>
        <label>TRIM7</label>
    </interactant>
    <organismsDiffer>false</organismsDiffer>
    <experiments>3</experiments>
</comment>
<comment type="interaction">
    <interactant intactId="EBI-366017">
        <id>Q13671</id>
    </interactant>
    <interactant intactId="EBI-6550597">
        <id>Q15642-2</id>
        <label>TRIP10</label>
    </interactant>
    <organismsDiffer>false</organismsDiffer>
    <experiments>3</experiments>
</comment>
<comment type="interaction">
    <interactant intactId="EBI-366017">
        <id>Q13671</id>
    </interactant>
    <interactant intactId="EBI-12806590">
        <id>Q86WV8</id>
        <label>TSC1</label>
    </interactant>
    <organismsDiffer>false</organismsDiffer>
    <experiments>3</experiments>
</comment>
<comment type="interaction">
    <interactant intactId="EBI-366017">
        <id>Q13671</id>
    </interactant>
    <interactant intactId="EBI-356498">
        <id>P62258</id>
        <label>YWHAE</label>
    </interactant>
    <organismsDiffer>false</organismsDiffer>
    <experiments>4</experiments>
</comment>
<comment type="interaction">
    <interactant intactId="EBI-366017">
        <id>Q13671</id>
    </interactant>
    <interactant intactId="EBI-740037">
        <id>O96006</id>
        <label>ZBED1</label>
    </interactant>
    <organismsDiffer>false</organismsDiffer>
    <experiments>3</experiments>
</comment>
<comment type="interaction">
    <interactant intactId="EBI-366030">
        <id>Q13671-1</id>
    </interactant>
    <interactant intactId="EBI-350145">
        <id>P01112</id>
        <label>HRAS</label>
    </interactant>
    <organismsDiffer>false</organismsDiffer>
    <experiments>2</experiments>
</comment>
<comment type="subcellular location">
    <subcellularLocation>
        <location evidence="5">Cytoplasm</location>
    </subcellularLocation>
    <subcellularLocation>
        <location evidence="5">Membrane</location>
    </subcellularLocation>
    <subcellularLocation>
        <location evidence="5">Cytoplasm</location>
        <location evidence="5">Cytoskeleton</location>
    </subcellularLocation>
    <text>Some amount is membrane-associated.</text>
</comment>
<comment type="alternative products">
    <event type="alternative splicing"/>
    <isoform>
        <id>Q13671-1</id>
        <name>RIN1</name>
        <sequence type="displayed"/>
    </isoform>
    <isoform>
        <id>Q13671-2</id>
        <name>RIN1-delta</name>
        <sequence type="described" ref="VSP_004377"/>
    </isoform>
</comment>
<comment type="tissue specificity">
    <text evidence="7">Expressed in all tissues examined with high levels in brain, placenta and pancreas.</text>
</comment>
<comment type="PTM">
    <text evidence="5 6 7 8">Phosphorylated on tyrosine residues by ABL1 and ABL2. Phosphorylation at Ser-351 by PRKD1 induces interaction with 14-3-3 proteins.</text>
</comment>
<comment type="miscellaneous">
    <molecule>Isoform RIN1-delta</molecule>
    <text evidence="10">Shows reduced ability to bind to Ras and 14-3-3 proteins.</text>
</comment>
<comment type="similarity">
    <text evidence="10">Belongs to the RIN (Ras interaction/interference) family.</text>
</comment>
<gene>
    <name type="primary">RIN1</name>
</gene>
<dbReference type="EMBL" id="L36463">
    <property type="protein sequence ID" value="AAB67270.1"/>
    <property type="molecule type" value="mRNA"/>
</dbReference>
<dbReference type="EMBL" id="BC014417">
    <property type="protein sequence ID" value="AAH14417.1"/>
    <property type="molecule type" value="mRNA"/>
</dbReference>
<dbReference type="CCDS" id="CCDS31614.1">
    <molecule id="Q13671-1"/>
</dbReference>
<dbReference type="PIR" id="A58613">
    <property type="entry name" value="A38637"/>
</dbReference>
<dbReference type="RefSeq" id="NP_001350489.1">
    <molecule id="Q13671-2"/>
    <property type="nucleotide sequence ID" value="NM_001363560.2"/>
</dbReference>
<dbReference type="RefSeq" id="NP_004283.2">
    <molecule id="Q13671-1"/>
    <property type="nucleotide sequence ID" value="NM_004292.3"/>
</dbReference>
<dbReference type="SMR" id="Q13671"/>
<dbReference type="BioGRID" id="114972">
    <property type="interactions" value="157"/>
</dbReference>
<dbReference type="CORUM" id="Q13671"/>
<dbReference type="DIP" id="DIP-117N"/>
<dbReference type="FunCoup" id="Q13671">
    <property type="interactions" value="496"/>
</dbReference>
<dbReference type="IntAct" id="Q13671">
    <property type="interactions" value="93"/>
</dbReference>
<dbReference type="MINT" id="Q13671"/>
<dbReference type="STRING" id="9606.ENSP00000310406"/>
<dbReference type="iPTMnet" id="Q13671"/>
<dbReference type="PhosphoSitePlus" id="Q13671"/>
<dbReference type="SwissPalm" id="Q13671"/>
<dbReference type="BioMuta" id="RIN1"/>
<dbReference type="DMDM" id="116242760"/>
<dbReference type="jPOST" id="Q13671"/>
<dbReference type="MassIVE" id="Q13671"/>
<dbReference type="PaxDb" id="9606-ENSP00000310406"/>
<dbReference type="PeptideAtlas" id="Q13671"/>
<dbReference type="ProteomicsDB" id="59652">
    <molecule id="Q13671-1"/>
</dbReference>
<dbReference type="ProteomicsDB" id="59653">
    <molecule id="Q13671-2"/>
</dbReference>
<dbReference type="Pumba" id="Q13671"/>
<dbReference type="Antibodypedia" id="30128">
    <property type="antibodies" value="207 antibodies from 31 providers"/>
</dbReference>
<dbReference type="DNASU" id="9610"/>
<dbReference type="Ensembl" id="ENST00000311320.9">
    <molecule id="Q13671-1"/>
    <property type="protein sequence ID" value="ENSP00000310406.4"/>
    <property type="gene ID" value="ENSG00000174791.11"/>
</dbReference>
<dbReference type="GeneID" id="9610"/>
<dbReference type="KEGG" id="hsa:9610"/>
<dbReference type="MANE-Select" id="ENST00000311320.9">
    <property type="protein sequence ID" value="ENSP00000310406.4"/>
    <property type="RefSeq nucleotide sequence ID" value="NM_004292.3"/>
    <property type="RefSeq protein sequence ID" value="NP_004283.2"/>
</dbReference>
<dbReference type="UCSC" id="uc001ohn.2">
    <molecule id="Q13671-1"/>
    <property type="organism name" value="human"/>
</dbReference>
<dbReference type="AGR" id="HGNC:18749"/>
<dbReference type="CTD" id="9610"/>
<dbReference type="DisGeNET" id="9610"/>
<dbReference type="GeneCards" id="RIN1"/>
<dbReference type="HGNC" id="HGNC:18749">
    <property type="gene designation" value="RIN1"/>
</dbReference>
<dbReference type="HPA" id="ENSG00000174791">
    <property type="expression patterns" value="Tissue enhanced (skin)"/>
</dbReference>
<dbReference type="MalaCards" id="RIN1"/>
<dbReference type="MIM" id="605965">
    <property type="type" value="gene"/>
</dbReference>
<dbReference type="neXtProt" id="NX_Q13671"/>
<dbReference type="OpenTargets" id="ENSG00000174791"/>
<dbReference type="PharmGKB" id="PA38671"/>
<dbReference type="VEuPathDB" id="HostDB:ENSG00000174791"/>
<dbReference type="eggNOG" id="KOG2320">
    <property type="taxonomic scope" value="Eukaryota"/>
</dbReference>
<dbReference type="GeneTree" id="ENSGT00940000161834"/>
<dbReference type="InParanoid" id="Q13671"/>
<dbReference type="OMA" id="CQGHEDA"/>
<dbReference type="OrthoDB" id="10013007at2759"/>
<dbReference type="PAN-GO" id="Q13671">
    <property type="GO annotations" value="4 GO annotations based on evolutionary models"/>
</dbReference>
<dbReference type="PhylomeDB" id="Q13671"/>
<dbReference type="TreeFam" id="TF331067"/>
<dbReference type="PathwayCommons" id="Q13671"/>
<dbReference type="Reactome" id="R-HSA-8876198">
    <property type="pathway name" value="RAB GEFs exchange GTP for GDP on RABs"/>
</dbReference>
<dbReference type="SignaLink" id="Q13671"/>
<dbReference type="SIGNOR" id="Q13671"/>
<dbReference type="BioGRID-ORCS" id="9610">
    <property type="hits" value="21 hits in 1150 CRISPR screens"/>
</dbReference>
<dbReference type="CD-CODE" id="FB4E32DD">
    <property type="entry name" value="Presynaptic clusters and postsynaptic densities"/>
</dbReference>
<dbReference type="ChiTaRS" id="RIN1">
    <property type="organism name" value="human"/>
</dbReference>
<dbReference type="GeneWiki" id="RIN1"/>
<dbReference type="GenomeRNAi" id="9610"/>
<dbReference type="Pharos" id="Q13671">
    <property type="development level" value="Tbio"/>
</dbReference>
<dbReference type="PRO" id="PR:Q13671"/>
<dbReference type="Proteomes" id="UP000005640">
    <property type="component" value="Chromosome 11"/>
</dbReference>
<dbReference type="RNAct" id="Q13671">
    <property type="molecule type" value="protein"/>
</dbReference>
<dbReference type="Bgee" id="ENSG00000174791">
    <property type="expression patterns" value="Expressed in parotid gland and 197 other cell types or tissues"/>
</dbReference>
<dbReference type="ExpressionAtlas" id="Q13671">
    <property type="expression patterns" value="baseline and differential"/>
</dbReference>
<dbReference type="GO" id="GO:0005737">
    <property type="term" value="C:cytoplasm"/>
    <property type="evidence" value="ECO:0000314"/>
    <property type="project" value="MGI"/>
</dbReference>
<dbReference type="GO" id="GO:0005856">
    <property type="term" value="C:cytoskeleton"/>
    <property type="evidence" value="ECO:0007669"/>
    <property type="project" value="UniProtKB-SubCell"/>
</dbReference>
<dbReference type="GO" id="GO:0005829">
    <property type="term" value="C:cytosol"/>
    <property type="evidence" value="ECO:0000318"/>
    <property type="project" value="GO_Central"/>
</dbReference>
<dbReference type="GO" id="GO:0030139">
    <property type="term" value="C:endocytic vesicle"/>
    <property type="evidence" value="ECO:0000318"/>
    <property type="project" value="GO_Central"/>
</dbReference>
<dbReference type="GO" id="GO:0005886">
    <property type="term" value="C:plasma membrane"/>
    <property type="evidence" value="ECO:0000314"/>
    <property type="project" value="MGI"/>
</dbReference>
<dbReference type="GO" id="GO:0005096">
    <property type="term" value="F:GTPase activator activity"/>
    <property type="evidence" value="ECO:0007669"/>
    <property type="project" value="UniProtKB-KW"/>
</dbReference>
<dbReference type="GO" id="GO:0005085">
    <property type="term" value="F:guanyl-nucleotide exchange factor activity"/>
    <property type="evidence" value="ECO:0000318"/>
    <property type="project" value="GO_Central"/>
</dbReference>
<dbReference type="GO" id="GO:0031267">
    <property type="term" value="F:small GTPase binding"/>
    <property type="evidence" value="ECO:0000318"/>
    <property type="project" value="GO_Central"/>
</dbReference>
<dbReference type="GO" id="GO:0006897">
    <property type="term" value="P:endocytosis"/>
    <property type="evidence" value="ECO:0007669"/>
    <property type="project" value="UniProtKB-KW"/>
</dbReference>
<dbReference type="GO" id="GO:0007165">
    <property type="term" value="P:signal transduction"/>
    <property type="evidence" value="ECO:0000304"/>
    <property type="project" value="ProtInc"/>
</dbReference>
<dbReference type="CDD" id="cd10393">
    <property type="entry name" value="SH2_RIN1"/>
    <property type="match status" value="1"/>
</dbReference>
<dbReference type="FunFam" id="3.30.505.10:FF:000068">
    <property type="entry name" value="ras and Rab interactor 1"/>
    <property type="match status" value="1"/>
</dbReference>
<dbReference type="FunFam" id="1.20.1050.80:FF:000002">
    <property type="entry name" value="Ras and Rab interactor 2"/>
    <property type="match status" value="1"/>
</dbReference>
<dbReference type="Gene3D" id="3.30.505.10">
    <property type="entry name" value="SH2 domain"/>
    <property type="match status" value="1"/>
</dbReference>
<dbReference type="Gene3D" id="1.20.1050.80">
    <property type="entry name" value="VPS9 domain"/>
    <property type="match status" value="1"/>
</dbReference>
<dbReference type="InterPro" id="IPR000159">
    <property type="entry name" value="RA_dom"/>
</dbReference>
<dbReference type="InterPro" id="IPR035867">
    <property type="entry name" value="RIN1_SH2"/>
</dbReference>
<dbReference type="InterPro" id="IPR000980">
    <property type="entry name" value="SH2"/>
</dbReference>
<dbReference type="InterPro" id="IPR036860">
    <property type="entry name" value="SH2_dom_sf"/>
</dbReference>
<dbReference type="InterPro" id="IPR003123">
    <property type="entry name" value="VPS9"/>
</dbReference>
<dbReference type="InterPro" id="IPR045046">
    <property type="entry name" value="Vps9-like"/>
</dbReference>
<dbReference type="InterPro" id="IPR037191">
    <property type="entry name" value="VPS9_dom_sf"/>
</dbReference>
<dbReference type="PANTHER" id="PTHR23101">
    <property type="entry name" value="RAB GDP/GTP EXCHANGE FACTOR"/>
    <property type="match status" value="1"/>
</dbReference>
<dbReference type="PANTHER" id="PTHR23101:SF62">
    <property type="entry name" value="RAS AND RAB INTERACTOR 1"/>
    <property type="match status" value="1"/>
</dbReference>
<dbReference type="Pfam" id="PF00788">
    <property type="entry name" value="RA"/>
    <property type="match status" value="1"/>
</dbReference>
<dbReference type="Pfam" id="PF23268">
    <property type="entry name" value="RIN1"/>
    <property type="match status" value="1"/>
</dbReference>
<dbReference type="Pfam" id="PF02204">
    <property type="entry name" value="VPS9"/>
    <property type="match status" value="1"/>
</dbReference>
<dbReference type="SMART" id="SM00314">
    <property type="entry name" value="RA"/>
    <property type="match status" value="1"/>
</dbReference>
<dbReference type="SMART" id="SM00252">
    <property type="entry name" value="SH2"/>
    <property type="match status" value="1"/>
</dbReference>
<dbReference type="SMART" id="SM00167">
    <property type="entry name" value="VPS9"/>
    <property type="match status" value="1"/>
</dbReference>
<dbReference type="SUPFAM" id="SSF55550">
    <property type="entry name" value="SH2 domain"/>
    <property type="match status" value="1"/>
</dbReference>
<dbReference type="SUPFAM" id="SSF109993">
    <property type="entry name" value="VPS9 domain"/>
    <property type="match status" value="1"/>
</dbReference>
<dbReference type="PROSITE" id="PS50200">
    <property type="entry name" value="RA"/>
    <property type="match status" value="1"/>
</dbReference>
<dbReference type="PROSITE" id="PS50001">
    <property type="entry name" value="SH2"/>
    <property type="match status" value="1"/>
</dbReference>
<dbReference type="PROSITE" id="PS51205">
    <property type="entry name" value="VPS9"/>
    <property type="match status" value="1"/>
</dbReference>